<accession>Q8R9T4</accession>
<comment type="function">
    <text evidence="1">Specifically methylates position 2 of adenine 2503 in 23S rRNA and position 2 of adenine 37 in tRNAs.</text>
</comment>
<comment type="catalytic activity">
    <reaction evidence="1">
        <text>adenosine(2503) in 23S rRNA + 2 reduced [2Fe-2S]-[ferredoxin] + 2 S-adenosyl-L-methionine = 2-methyladenosine(2503) in 23S rRNA + 5'-deoxyadenosine + L-methionine + 2 oxidized [2Fe-2S]-[ferredoxin] + S-adenosyl-L-homocysteine</text>
        <dbReference type="Rhea" id="RHEA:42916"/>
        <dbReference type="Rhea" id="RHEA-COMP:10000"/>
        <dbReference type="Rhea" id="RHEA-COMP:10001"/>
        <dbReference type="Rhea" id="RHEA-COMP:10152"/>
        <dbReference type="Rhea" id="RHEA-COMP:10282"/>
        <dbReference type="ChEBI" id="CHEBI:17319"/>
        <dbReference type="ChEBI" id="CHEBI:33737"/>
        <dbReference type="ChEBI" id="CHEBI:33738"/>
        <dbReference type="ChEBI" id="CHEBI:57844"/>
        <dbReference type="ChEBI" id="CHEBI:57856"/>
        <dbReference type="ChEBI" id="CHEBI:59789"/>
        <dbReference type="ChEBI" id="CHEBI:74411"/>
        <dbReference type="ChEBI" id="CHEBI:74497"/>
        <dbReference type="EC" id="2.1.1.192"/>
    </reaction>
</comment>
<comment type="catalytic activity">
    <reaction evidence="1">
        <text>adenosine(37) in tRNA + 2 reduced [2Fe-2S]-[ferredoxin] + 2 S-adenosyl-L-methionine = 2-methyladenosine(37) in tRNA + 5'-deoxyadenosine + L-methionine + 2 oxidized [2Fe-2S]-[ferredoxin] + S-adenosyl-L-homocysteine</text>
        <dbReference type="Rhea" id="RHEA:43332"/>
        <dbReference type="Rhea" id="RHEA-COMP:10000"/>
        <dbReference type="Rhea" id="RHEA-COMP:10001"/>
        <dbReference type="Rhea" id="RHEA-COMP:10162"/>
        <dbReference type="Rhea" id="RHEA-COMP:10485"/>
        <dbReference type="ChEBI" id="CHEBI:17319"/>
        <dbReference type="ChEBI" id="CHEBI:33737"/>
        <dbReference type="ChEBI" id="CHEBI:33738"/>
        <dbReference type="ChEBI" id="CHEBI:57844"/>
        <dbReference type="ChEBI" id="CHEBI:57856"/>
        <dbReference type="ChEBI" id="CHEBI:59789"/>
        <dbReference type="ChEBI" id="CHEBI:74411"/>
        <dbReference type="ChEBI" id="CHEBI:74497"/>
        <dbReference type="EC" id="2.1.1.192"/>
    </reaction>
</comment>
<comment type="cofactor">
    <cofactor evidence="1">
        <name>[4Fe-4S] cluster</name>
        <dbReference type="ChEBI" id="CHEBI:49883"/>
    </cofactor>
    <text evidence="1">Binds 1 [4Fe-4S] cluster. The cluster is coordinated with 3 cysteines and an exchangeable S-adenosyl-L-methionine.</text>
</comment>
<comment type="subcellular location">
    <subcellularLocation>
        <location evidence="1">Cytoplasm</location>
    </subcellularLocation>
</comment>
<comment type="miscellaneous">
    <text evidence="1">Reaction proceeds by a ping-pong mechanism involving intermediate methylation of a conserved cysteine residue.</text>
</comment>
<comment type="similarity">
    <text evidence="1">Belongs to the radical SAM superfamily. RlmN family.</text>
</comment>
<name>RLMN_CALS4</name>
<keyword id="KW-0004">4Fe-4S</keyword>
<keyword id="KW-0963">Cytoplasm</keyword>
<keyword id="KW-1015">Disulfide bond</keyword>
<keyword id="KW-0408">Iron</keyword>
<keyword id="KW-0411">Iron-sulfur</keyword>
<keyword id="KW-0479">Metal-binding</keyword>
<keyword id="KW-0489">Methyltransferase</keyword>
<keyword id="KW-1185">Reference proteome</keyword>
<keyword id="KW-0698">rRNA processing</keyword>
<keyword id="KW-0949">S-adenosyl-L-methionine</keyword>
<keyword id="KW-0808">Transferase</keyword>
<keyword id="KW-0819">tRNA processing</keyword>
<gene>
    <name evidence="1" type="primary">rlmN</name>
    <name type="ordered locus">TTE1502</name>
</gene>
<evidence type="ECO:0000255" key="1">
    <source>
        <dbReference type="HAMAP-Rule" id="MF_01849"/>
    </source>
</evidence>
<evidence type="ECO:0000255" key="2">
    <source>
        <dbReference type="PROSITE-ProRule" id="PRU01266"/>
    </source>
</evidence>
<reference key="1">
    <citation type="journal article" date="2002" name="Genome Res.">
        <title>A complete sequence of the T. tengcongensis genome.</title>
        <authorList>
            <person name="Bao Q."/>
            <person name="Tian Y."/>
            <person name="Li W."/>
            <person name="Xu Z."/>
            <person name="Xuan Z."/>
            <person name="Hu S."/>
            <person name="Dong W."/>
            <person name="Yang J."/>
            <person name="Chen Y."/>
            <person name="Xue Y."/>
            <person name="Xu Y."/>
            <person name="Lai X."/>
            <person name="Huang L."/>
            <person name="Dong X."/>
            <person name="Ma Y."/>
            <person name="Ling L."/>
            <person name="Tan H."/>
            <person name="Chen R."/>
            <person name="Wang J."/>
            <person name="Yu J."/>
            <person name="Yang H."/>
        </authorList>
    </citation>
    <scope>NUCLEOTIDE SEQUENCE [LARGE SCALE GENOMIC DNA]</scope>
    <source>
        <strain>DSM 15242 / JCM 11007 / NBRC 100824 / MB4</strain>
    </source>
</reference>
<protein>
    <recommendedName>
        <fullName evidence="1">Probable dual-specificity RNA methyltransferase RlmN</fullName>
        <ecNumber evidence="1">2.1.1.192</ecNumber>
    </recommendedName>
    <alternativeName>
        <fullName evidence="1">23S rRNA (adenine(2503)-C(2))-methyltransferase</fullName>
    </alternativeName>
    <alternativeName>
        <fullName evidence="1">23S rRNA m2A2503 methyltransferase</fullName>
    </alternativeName>
    <alternativeName>
        <fullName evidence="1">Ribosomal RNA large subunit methyltransferase N</fullName>
    </alternativeName>
    <alternativeName>
        <fullName evidence="1">tRNA (adenine(37)-C(2))-methyltransferase</fullName>
    </alternativeName>
    <alternativeName>
        <fullName evidence="1">tRNA m2A37 methyltransferase</fullName>
    </alternativeName>
</protein>
<feature type="chain" id="PRO_0000350496" description="Probable dual-specificity RNA methyltransferase RlmN">
    <location>
        <begin position="1"/>
        <end position="342"/>
    </location>
</feature>
<feature type="domain" description="Radical SAM core" evidence="2">
    <location>
        <begin position="97"/>
        <end position="326"/>
    </location>
</feature>
<feature type="active site" description="Proton acceptor" evidence="1">
    <location>
        <position position="91"/>
    </location>
</feature>
<feature type="active site" description="S-methylcysteine intermediate" evidence="1">
    <location>
        <position position="331"/>
    </location>
</feature>
<feature type="binding site" evidence="1">
    <location>
        <position position="111"/>
    </location>
    <ligand>
        <name>[4Fe-4S] cluster</name>
        <dbReference type="ChEBI" id="CHEBI:49883"/>
        <note>4Fe-4S-S-AdoMet</note>
    </ligand>
</feature>
<feature type="binding site" evidence="1">
    <location>
        <position position="115"/>
    </location>
    <ligand>
        <name>[4Fe-4S] cluster</name>
        <dbReference type="ChEBI" id="CHEBI:49883"/>
        <note>4Fe-4S-S-AdoMet</note>
    </ligand>
</feature>
<feature type="binding site" evidence="1">
    <location>
        <position position="118"/>
    </location>
    <ligand>
        <name>[4Fe-4S] cluster</name>
        <dbReference type="ChEBI" id="CHEBI:49883"/>
        <note>4Fe-4S-S-AdoMet</note>
    </ligand>
</feature>
<feature type="binding site" evidence="1">
    <location>
        <begin position="157"/>
        <end position="158"/>
    </location>
    <ligand>
        <name>S-adenosyl-L-methionine</name>
        <dbReference type="ChEBI" id="CHEBI:59789"/>
    </ligand>
</feature>
<feature type="binding site" evidence="1">
    <location>
        <position position="189"/>
    </location>
    <ligand>
        <name>S-adenosyl-L-methionine</name>
        <dbReference type="ChEBI" id="CHEBI:59789"/>
    </ligand>
</feature>
<feature type="binding site" evidence="1">
    <location>
        <begin position="212"/>
        <end position="214"/>
    </location>
    <ligand>
        <name>S-adenosyl-L-methionine</name>
        <dbReference type="ChEBI" id="CHEBI:59789"/>
    </ligand>
</feature>
<feature type="binding site" evidence="1">
    <location>
        <position position="288"/>
    </location>
    <ligand>
        <name>S-adenosyl-L-methionine</name>
        <dbReference type="ChEBI" id="CHEBI:59789"/>
    </ligand>
</feature>
<feature type="disulfide bond" description="(transient)" evidence="1">
    <location>
        <begin position="104"/>
        <end position="331"/>
    </location>
</feature>
<dbReference type="EC" id="2.1.1.192" evidence="1"/>
<dbReference type="EMBL" id="AE008691">
    <property type="protein sequence ID" value="AAM24720.1"/>
    <property type="molecule type" value="Genomic_DNA"/>
</dbReference>
<dbReference type="RefSeq" id="WP_011025761.1">
    <property type="nucleotide sequence ID" value="NZ_JANUCV010000001.1"/>
</dbReference>
<dbReference type="SMR" id="Q8R9T4"/>
<dbReference type="STRING" id="273068.TTE1502"/>
<dbReference type="KEGG" id="tte:TTE1502"/>
<dbReference type="eggNOG" id="COG0820">
    <property type="taxonomic scope" value="Bacteria"/>
</dbReference>
<dbReference type="HOGENOM" id="CLU_029101_2_0_9"/>
<dbReference type="OrthoDB" id="9793973at2"/>
<dbReference type="Proteomes" id="UP000000555">
    <property type="component" value="Chromosome"/>
</dbReference>
<dbReference type="GO" id="GO:0005737">
    <property type="term" value="C:cytoplasm"/>
    <property type="evidence" value="ECO:0007669"/>
    <property type="project" value="UniProtKB-SubCell"/>
</dbReference>
<dbReference type="GO" id="GO:0051539">
    <property type="term" value="F:4 iron, 4 sulfur cluster binding"/>
    <property type="evidence" value="ECO:0007669"/>
    <property type="project" value="UniProtKB-UniRule"/>
</dbReference>
<dbReference type="GO" id="GO:0046872">
    <property type="term" value="F:metal ion binding"/>
    <property type="evidence" value="ECO:0007669"/>
    <property type="project" value="UniProtKB-KW"/>
</dbReference>
<dbReference type="GO" id="GO:0070040">
    <property type="term" value="F:rRNA (adenine(2503)-C2-)-methyltransferase activity"/>
    <property type="evidence" value="ECO:0007669"/>
    <property type="project" value="UniProtKB-UniRule"/>
</dbReference>
<dbReference type="GO" id="GO:0019843">
    <property type="term" value="F:rRNA binding"/>
    <property type="evidence" value="ECO:0007669"/>
    <property type="project" value="UniProtKB-UniRule"/>
</dbReference>
<dbReference type="GO" id="GO:0002935">
    <property type="term" value="F:tRNA (adenine(37)-C2)-methyltransferase activity"/>
    <property type="evidence" value="ECO:0007669"/>
    <property type="project" value="UniProtKB-UniRule"/>
</dbReference>
<dbReference type="GO" id="GO:0000049">
    <property type="term" value="F:tRNA binding"/>
    <property type="evidence" value="ECO:0007669"/>
    <property type="project" value="UniProtKB-UniRule"/>
</dbReference>
<dbReference type="GO" id="GO:0070475">
    <property type="term" value="P:rRNA base methylation"/>
    <property type="evidence" value="ECO:0007669"/>
    <property type="project" value="UniProtKB-UniRule"/>
</dbReference>
<dbReference type="GO" id="GO:0030488">
    <property type="term" value="P:tRNA methylation"/>
    <property type="evidence" value="ECO:0007669"/>
    <property type="project" value="UniProtKB-UniRule"/>
</dbReference>
<dbReference type="CDD" id="cd01335">
    <property type="entry name" value="Radical_SAM"/>
    <property type="match status" value="1"/>
</dbReference>
<dbReference type="FunFam" id="1.10.150.530:FF:000003">
    <property type="entry name" value="Dual-specificity RNA methyltransferase RlmN"/>
    <property type="match status" value="1"/>
</dbReference>
<dbReference type="FunFam" id="3.20.20.70:FF:000014">
    <property type="entry name" value="Probable dual-specificity RNA methyltransferase RlmN"/>
    <property type="match status" value="1"/>
</dbReference>
<dbReference type="Gene3D" id="1.10.150.530">
    <property type="match status" value="1"/>
</dbReference>
<dbReference type="Gene3D" id="3.20.20.70">
    <property type="entry name" value="Aldolase class I"/>
    <property type="match status" value="1"/>
</dbReference>
<dbReference type="HAMAP" id="MF_01849">
    <property type="entry name" value="RNA_methyltr_RlmN"/>
    <property type="match status" value="1"/>
</dbReference>
<dbReference type="InterPro" id="IPR013785">
    <property type="entry name" value="Aldolase_TIM"/>
</dbReference>
<dbReference type="InterPro" id="IPR040072">
    <property type="entry name" value="Methyltransferase_A"/>
</dbReference>
<dbReference type="InterPro" id="IPR048641">
    <property type="entry name" value="RlmN_N"/>
</dbReference>
<dbReference type="InterPro" id="IPR027492">
    <property type="entry name" value="RNA_MTrfase_RlmN"/>
</dbReference>
<dbReference type="InterPro" id="IPR004383">
    <property type="entry name" value="rRNA_lsu_MTrfase_RlmN/Cfr"/>
</dbReference>
<dbReference type="InterPro" id="IPR007197">
    <property type="entry name" value="rSAM"/>
</dbReference>
<dbReference type="NCBIfam" id="TIGR00048">
    <property type="entry name" value="rRNA_mod_RlmN"/>
    <property type="match status" value="1"/>
</dbReference>
<dbReference type="PANTHER" id="PTHR30544">
    <property type="entry name" value="23S RRNA METHYLTRANSFERASE"/>
    <property type="match status" value="1"/>
</dbReference>
<dbReference type="PANTHER" id="PTHR30544:SF5">
    <property type="entry name" value="RADICAL SAM CORE DOMAIN-CONTAINING PROTEIN"/>
    <property type="match status" value="1"/>
</dbReference>
<dbReference type="Pfam" id="PF13353">
    <property type="entry name" value="Fer4_12"/>
    <property type="match status" value="1"/>
</dbReference>
<dbReference type="Pfam" id="PF04055">
    <property type="entry name" value="Radical_SAM"/>
    <property type="match status" value="1"/>
</dbReference>
<dbReference type="Pfam" id="PF21016">
    <property type="entry name" value="RlmN_N"/>
    <property type="match status" value="1"/>
</dbReference>
<dbReference type="PIRSF" id="PIRSF006004">
    <property type="entry name" value="CHP00048"/>
    <property type="match status" value="1"/>
</dbReference>
<dbReference type="SFLD" id="SFLDF00275">
    <property type="entry name" value="adenosine_C2_methyltransferase"/>
    <property type="match status" value="1"/>
</dbReference>
<dbReference type="SFLD" id="SFLDS00029">
    <property type="entry name" value="Radical_SAM"/>
    <property type="match status" value="1"/>
</dbReference>
<dbReference type="SUPFAM" id="SSF102114">
    <property type="entry name" value="Radical SAM enzymes"/>
    <property type="match status" value="1"/>
</dbReference>
<dbReference type="PROSITE" id="PS51918">
    <property type="entry name" value="RADICAL_SAM"/>
    <property type="match status" value="1"/>
</dbReference>
<organism>
    <name type="scientific">Caldanaerobacter subterraneus subsp. tengcongensis (strain DSM 15242 / JCM 11007 / NBRC 100824 / MB4)</name>
    <name type="common">Thermoanaerobacter tengcongensis</name>
    <dbReference type="NCBI Taxonomy" id="273068"/>
    <lineage>
        <taxon>Bacteria</taxon>
        <taxon>Bacillati</taxon>
        <taxon>Bacillota</taxon>
        <taxon>Clostridia</taxon>
        <taxon>Thermoanaerobacterales</taxon>
        <taxon>Thermoanaerobacteraceae</taxon>
        <taxon>Caldanaerobacter</taxon>
    </lineage>
</organism>
<proteinExistence type="inferred from homology"/>
<sequence length="342" mass="39453">MYNLKDMTLEEMEEFFVNLGESKFRAKQLYKWIYDKRVTDFDLMTDISKNLRAKLKEIAYISELKIIERRVSQIDDTVKYLFLLEDKNIIEGVAIKYKFGNTACVSTQVGCNMKCKFCASAIGGKVRDLKASEMVDQVMAIDSDYGKISNIVLMGSGEPFDNYDEVMKFIKIVNNPYGLKIGKRHITISTVGIVPKIYQFADEELQVNLSISLHAPNNELRNELMPINRAYPLEELMKACRYYIEKTNRRITFEYALIDGVNDKKEHAYQLVDLLKGMLCHVNLIPINYVKEIGFRKSNNEKVMMFKKIIENAGITCTVRRELGSDIEAACGQLRRKYLKEG</sequence>